<evidence type="ECO:0000255" key="1"/>
<evidence type="ECO:0000255" key="2">
    <source>
        <dbReference type="PROSITE-ProRule" id="PRU00498"/>
    </source>
</evidence>
<evidence type="ECO:0000269" key="3">
    <source>
    </source>
</evidence>
<evidence type="ECO:0000269" key="4">
    <source>
    </source>
</evidence>
<evidence type="ECO:0000269" key="5">
    <source>
    </source>
</evidence>
<evidence type="ECO:0000303" key="6">
    <source>
    </source>
</evidence>
<evidence type="ECO:0000303" key="7">
    <source>
    </source>
</evidence>
<evidence type="ECO:0000305" key="8"/>
<evidence type="ECO:0000312" key="9">
    <source>
        <dbReference type="EMBL" id="AAC31158.1"/>
    </source>
</evidence>
<evidence type="ECO:0000312" key="10">
    <source>
        <dbReference type="Proteomes" id="UP000008820"/>
    </source>
</evidence>
<accession>A0A1S4FGH1</accession>
<accession>O76292</accession>
<protein>
    <recommendedName>
        <fullName evidence="6 7">FXa-directed anticoagulant</fullName>
    </recommendedName>
</protein>
<organism evidence="10">
    <name type="scientific">Aedes aegypti</name>
    <name type="common">Yellowfever mosquito</name>
    <name type="synonym">Culex aegypti</name>
    <dbReference type="NCBI Taxonomy" id="7159"/>
    <lineage>
        <taxon>Eukaryota</taxon>
        <taxon>Metazoa</taxon>
        <taxon>Ecdysozoa</taxon>
        <taxon>Arthropoda</taxon>
        <taxon>Hexapoda</taxon>
        <taxon>Insecta</taxon>
        <taxon>Pterygota</taxon>
        <taxon>Neoptera</taxon>
        <taxon>Endopterygota</taxon>
        <taxon>Diptera</taxon>
        <taxon>Nematocera</taxon>
        <taxon>Culicoidea</taxon>
        <taxon>Culicidae</taxon>
        <taxon>Culicinae</taxon>
        <taxon>Aedini</taxon>
        <taxon>Aedes</taxon>
        <taxon>Stegomyia</taxon>
    </lineage>
</organism>
<reference evidence="9" key="1">
    <citation type="journal article" date="1998" name="J. Biol. Chem.">
        <title>Isolation and characterization of the gene encoding a novel factor Xa-directed anticoagulant from the yellow fever mosquito, Aedes aegypti.</title>
        <authorList>
            <person name="Stark K.R."/>
            <person name="James A.A."/>
        </authorList>
    </citation>
    <scope>NUCLEOTIDE SEQUENCE [MRNA]</scope>
    <scope>PROTEIN SEQUENCE OF 170-183; 291-303; 331-341 AND 398-407</scope>
    <scope>FUNCTION</scope>
    <scope>TISSUE SPECIFICITY</scope>
    <scope>BLOCKED N-TERMINUS</scope>
    <source>
        <strain evidence="9">Rockefeller</strain>
    </source>
</reference>
<reference evidence="10" key="2">
    <citation type="submission" date="2017-06" db="EMBL/GenBank/DDBJ databases">
        <title>Aedes aegypti genome working group (AGWG) sequencing and assembly.</title>
        <authorList>
            <consortium name="Aedes aegypti Genome Working Group (AGWG)"/>
            <person name="Matthews B.J."/>
        </authorList>
    </citation>
    <scope>NUCLEOTIDE SEQUENCE [LARGE SCALE GENOMIC DNA]</scope>
    <source>
        <strain evidence="10">LVP_AGWG</strain>
    </source>
</reference>
<reference evidence="8" key="3">
    <citation type="journal article" date="1995" name="Exp. Parasitol.">
        <title>A factor Xa-directed anticoagulant from the salivary glands of the yellow fever mosquito Aedes aegypti.</title>
        <authorList>
            <person name="Stark K.R."/>
            <person name="James A.A."/>
        </authorList>
    </citation>
    <scope>FUNCTION</scope>
    <scope>BIOPHYSICOCHEMICAL PROPERTIES</scope>
    <scope>TISSUE SPECIFICITY</scope>
    <source>
        <strain evidence="6">Rockefeller</strain>
    </source>
</reference>
<reference evidence="8" key="4">
    <citation type="journal article" date="2022" name="Viruses">
        <title>Multiple Salivary Proteins from Aedes aegypti Mosquito Bind to the Zika Virus Envelope Protein.</title>
        <authorList>
            <person name="Valenzuela-Leon P.C."/>
            <person name="Shrivastava G."/>
            <person name="Martin-Martin I."/>
            <person name="Cardenas J.C."/>
            <person name="Londono-Renteria B."/>
            <person name="Calvo E."/>
        </authorList>
    </citation>
    <scope>FUNCTION (MICROBIAL INFECTION)</scope>
    <scope>INTERACTION WITH ZIKA VIRUS ENVELOPE PROTEIN E</scope>
</reference>
<sequence length="415" mass="47662">MYLKIVILVTFPLVCFTQDDTPLSKPMAIDYQAEFAWDLYKKLQLGFTQNLAIAPYSLRKIFVCLQQLTVSTNPASAALSEQLKNVLKFNPKGKLPDLVRRRYSSQRAMLERENSFNTTTLAAVIGREKKTNSFWDLPNSCAIFVGSLRPGSPKQMSRRFNAAMRNISKSGMQNFLSTSDIDRDLDFLIADSWIFKGLWSYQFEEQHTTTCNFYTNSTSKGLMRFMYLQEYLKYGYFSEWNVEAVELPLHHGSSFSCMLMMPVKADIGVLIKSLNHRRFKDIYSKMSFSKTDVRLPQFTLRIKFSAKSILQQFGFNAAFNESVFHVFDNKNAVPLGDVIQKVKLVMDHDGEQSAKMYVDRRMGNLFIAHQPFIFVIFEKTQLVPIIVGHMVTASTPKDIGPESDEISCDRPPRYQ</sequence>
<gene>
    <name evidence="8" type="primary">SRPN25</name>
    <name evidence="8" type="synonym">AAEL007420</name>
    <name evidence="7" type="synonym">AFXa</name>
</gene>
<proteinExistence type="evidence at protein level"/>
<keyword id="KW-1203">Blood coagulation cascade inhibiting toxin</keyword>
<keyword id="KW-0903">Direct protein sequencing</keyword>
<keyword id="KW-0325">Glycoprotein</keyword>
<keyword id="KW-1199">Hemostasis impairing toxin</keyword>
<keyword id="KW-0646">Protease inhibitor</keyword>
<keyword id="KW-1185">Reference proteome</keyword>
<keyword id="KW-0964">Secreted</keyword>
<keyword id="KW-0722">Serine protease inhibitor</keyword>
<keyword id="KW-0732">Signal</keyword>
<keyword id="KW-0800">Toxin</keyword>
<dbReference type="EMBL" id="AF050133">
    <property type="protein sequence ID" value="AAC31158.1"/>
    <property type="molecule type" value="mRNA"/>
</dbReference>
<dbReference type="SMR" id="A0A1S4FGH1"/>
<dbReference type="MEROPS" id="I04.090"/>
<dbReference type="EnsemblMetazoa" id="AAEL007420-RB">
    <property type="protein sequence ID" value="AAEL007420-PB"/>
    <property type="gene ID" value="AAEL007420"/>
</dbReference>
<dbReference type="VEuPathDB" id="VectorBase:AAEL007420"/>
<dbReference type="InParanoid" id="A0A1S4FGH1"/>
<dbReference type="OrthoDB" id="671595at2759"/>
<dbReference type="Proteomes" id="UP000008820">
    <property type="component" value="Chromosome 2"/>
</dbReference>
<dbReference type="GO" id="GO:0005615">
    <property type="term" value="C:extracellular space"/>
    <property type="evidence" value="ECO:0007669"/>
    <property type="project" value="InterPro"/>
</dbReference>
<dbReference type="GO" id="GO:0004867">
    <property type="term" value="F:serine-type endopeptidase inhibitor activity"/>
    <property type="evidence" value="ECO:0007669"/>
    <property type="project" value="UniProtKB-KW"/>
</dbReference>
<dbReference type="GO" id="GO:0090729">
    <property type="term" value="F:toxin activity"/>
    <property type="evidence" value="ECO:0007669"/>
    <property type="project" value="UniProtKB-KW"/>
</dbReference>
<dbReference type="CDD" id="cd00172">
    <property type="entry name" value="serpin"/>
    <property type="match status" value="1"/>
</dbReference>
<dbReference type="Gene3D" id="2.30.39.10">
    <property type="entry name" value="Alpha-1-antitrypsin, domain 1"/>
    <property type="match status" value="1"/>
</dbReference>
<dbReference type="Gene3D" id="3.30.497.10">
    <property type="entry name" value="Antithrombin, subunit I, domain 2"/>
    <property type="match status" value="1"/>
</dbReference>
<dbReference type="InterPro" id="IPR023796">
    <property type="entry name" value="Serpin_dom"/>
</dbReference>
<dbReference type="InterPro" id="IPR000215">
    <property type="entry name" value="Serpin_fam"/>
</dbReference>
<dbReference type="InterPro" id="IPR036186">
    <property type="entry name" value="Serpin_sf"/>
</dbReference>
<dbReference type="InterPro" id="IPR042178">
    <property type="entry name" value="Serpin_sf_1"/>
</dbReference>
<dbReference type="InterPro" id="IPR042185">
    <property type="entry name" value="Serpin_sf_2"/>
</dbReference>
<dbReference type="PANTHER" id="PTHR11461:SF211">
    <property type="entry name" value="GH10112P-RELATED"/>
    <property type="match status" value="1"/>
</dbReference>
<dbReference type="PANTHER" id="PTHR11461">
    <property type="entry name" value="SERINE PROTEASE INHIBITOR, SERPIN"/>
    <property type="match status" value="1"/>
</dbReference>
<dbReference type="Pfam" id="PF00079">
    <property type="entry name" value="Serpin"/>
    <property type="match status" value="1"/>
</dbReference>
<dbReference type="SMART" id="SM00093">
    <property type="entry name" value="SERPIN"/>
    <property type="match status" value="1"/>
</dbReference>
<dbReference type="SUPFAM" id="SSF56574">
    <property type="entry name" value="Serpins"/>
    <property type="match status" value="1"/>
</dbReference>
<name>FXDIR_AEDAE</name>
<comment type="function">
    <text evidence="4 5">Anticoagulant serpin-type protein inhibiting host coagulation factor Xa (F10) (PubMed:7498429, PubMed:9694825). Does not inhibit host thrombin (F2) and trypsin (PubMed:9694825).</text>
</comment>
<comment type="function">
    <text evidence="3">(Microbial infection) Does not affect Zika virus replication in human endothelial cells and keratinocytes.</text>
</comment>
<comment type="biophysicochemical properties">
    <phDependence>
        <text evidence="4">Optimum pH is 8.0.</text>
    </phDependence>
</comment>
<comment type="subunit">
    <text evidence="3">(Microbial infection) Interacts with Zika virus envelope protein E and Zika virus-like particles; the interaction does not affect Zika virus replication in human endothelial cells and keratinocytes.</text>
</comment>
<comment type="subcellular location">
    <subcellularLocation>
        <location evidence="8">Secreted</location>
    </subcellularLocation>
</comment>
<comment type="tissue specificity">
    <text evidence="4 5">Female salivary gland (at protein level) (PubMed:7498429, PubMed:9694825). Not detected in female carcass without head and salivary glands (PubMed:9694825). Not detected in male tissues (PubMed:9694825).</text>
</comment>
<comment type="PTM">
    <text evidence="5">The N-terminus is blocked.</text>
</comment>
<comment type="miscellaneous">
    <text evidence="3">Patients with dengue virus or Zika virus infections during the acute or early convalescence phase have higher levels of IgG serum antibodies against the protein.</text>
</comment>
<comment type="similarity">
    <text evidence="8">Belongs to the serpin family.</text>
</comment>
<feature type="signal peptide" evidence="1">
    <location>
        <begin position="1"/>
        <end position="17"/>
    </location>
</feature>
<feature type="chain" id="PRO_5004159986" description="FXa-directed anticoagulant" evidence="1">
    <location>
        <begin position="18"/>
        <end position="415"/>
    </location>
</feature>
<feature type="glycosylation site" description="N-linked (GlcNAc...) asparagine" evidence="2">
    <location>
        <position position="117"/>
    </location>
</feature>
<feature type="glycosylation site" description="N-linked (GlcNAc...) asparagine" evidence="2">
    <location>
        <position position="166"/>
    </location>
</feature>
<feature type="glycosylation site" description="N-linked (GlcNAc...) asparagine" evidence="2">
    <location>
        <position position="216"/>
    </location>
</feature>
<feature type="glycosylation site" description="N-linked (GlcNAc...) asparagine" evidence="2">
    <location>
        <position position="320"/>
    </location>
</feature>
<feature type="sequence conflict" description="In Ref. 1; AAC31158." evidence="8" ref="1">
    <original>NVLK</original>
    <variation>MYLR</variation>
    <location>
        <begin position="85"/>
        <end position="88"/>
    </location>
</feature>